<sequence length="589" mass="66030">MRSMKAIIEYLLKQALINLQQSGEMPIDLEIEIKVENAKDPAHGDYATNLALVLAKPCRQAPKVLAERLVAVIPVDPSVEKIEIAGAGFINFFMRSTARSLIISEILNKGKEFGRGNLGQSQKVLIEFVSANPTGPLHVGHGRGAAFGATLGNVLKAAGYDVTLEYYVNDAGRQMNILAVSVWLRYLELAGEPIVFPANGYKGQYVYEIAQEIWSEQGNQFVHPWISVVENLPADEPEGGDKETYIDAIIARAQSLLGKDGFANFHQHALKTVLDDIKDDLQAFGVRFDSWFSEQSLFEDGSIEKGIQALKDRGHTYEREGALWFRATDFGDEKDRVLVRANGQTTYFASDVAYHWNKYDRGFDRVIDIFGADHHGYVTRIKTAVKALGHDESALDVILVQFAILYRGGDRVQMSTRSGSFVTLRELREEVGNDAARYFYVARKPEQHMDFDLDLAKSESSDNPVYYIQYAHARICSVLRQLKERGLKWDKDMGLKNLDLLEQQHEATLISLIARYPEVIQSAAASCEPHQLAYYLRELANGLHSYYNAIQLLCEQEQLRCARLCLLESVRQVLNNGLAILGVSAPESM</sequence>
<evidence type="ECO:0000255" key="1">
    <source>
        <dbReference type="HAMAP-Rule" id="MF_00123"/>
    </source>
</evidence>
<feature type="chain" id="PRO_0000242039" description="Arginine--tRNA ligase">
    <location>
        <begin position="1"/>
        <end position="589"/>
    </location>
</feature>
<feature type="short sequence motif" description="'HIGH' region">
    <location>
        <begin position="131"/>
        <end position="141"/>
    </location>
</feature>
<accession>Q5ZTX7</accession>
<organism>
    <name type="scientific">Legionella pneumophila subsp. pneumophila (strain Philadelphia 1 / ATCC 33152 / DSM 7513)</name>
    <dbReference type="NCBI Taxonomy" id="272624"/>
    <lineage>
        <taxon>Bacteria</taxon>
        <taxon>Pseudomonadati</taxon>
        <taxon>Pseudomonadota</taxon>
        <taxon>Gammaproteobacteria</taxon>
        <taxon>Legionellales</taxon>
        <taxon>Legionellaceae</taxon>
        <taxon>Legionella</taxon>
    </lineage>
</organism>
<reference key="1">
    <citation type="journal article" date="2004" name="Science">
        <title>The genomic sequence of the accidental pathogen Legionella pneumophila.</title>
        <authorList>
            <person name="Chien M."/>
            <person name="Morozova I."/>
            <person name="Shi S."/>
            <person name="Sheng H."/>
            <person name="Chen J."/>
            <person name="Gomez S.M."/>
            <person name="Asamani G."/>
            <person name="Hill K."/>
            <person name="Nuara J."/>
            <person name="Feder M."/>
            <person name="Rineer J."/>
            <person name="Greenberg J.J."/>
            <person name="Steshenko V."/>
            <person name="Park S.H."/>
            <person name="Zhao B."/>
            <person name="Teplitskaya E."/>
            <person name="Edwards J.R."/>
            <person name="Pampou S."/>
            <person name="Georghiou A."/>
            <person name="Chou I.-C."/>
            <person name="Iannuccilli W."/>
            <person name="Ulz M.E."/>
            <person name="Kim D.H."/>
            <person name="Geringer-Sameth A."/>
            <person name="Goldsberry C."/>
            <person name="Morozov P."/>
            <person name="Fischer S.G."/>
            <person name="Segal G."/>
            <person name="Qu X."/>
            <person name="Rzhetsky A."/>
            <person name="Zhang P."/>
            <person name="Cayanis E."/>
            <person name="De Jong P.J."/>
            <person name="Ju J."/>
            <person name="Kalachikov S."/>
            <person name="Shuman H.A."/>
            <person name="Russo J.J."/>
        </authorList>
    </citation>
    <scope>NUCLEOTIDE SEQUENCE [LARGE SCALE GENOMIC DNA]</scope>
    <source>
        <strain>Philadelphia 1 / ATCC 33152 / DSM 7513</strain>
    </source>
</reference>
<name>SYR_LEGPH</name>
<keyword id="KW-0030">Aminoacyl-tRNA synthetase</keyword>
<keyword id="KW-0067">ATP-binding</keyword>
<keyword id="KW-0963">Cytoplasm</keyword>
<keyword id="KW-0436">Ligase</keyword>
<keyword id="KW-0547">Nucleotide-binding</keyword>
<keyword id="KW-0648">Protein biosynthesis</keyword>
<keyword id="KW-1185">Reference proteome</keyword>
<proteinExistence type="inferred from homology"/>
<comment type="catalytic activity">
    <reaction evidence="1">
        <text>tRNA(Arg) + L-arginine + ATP = L-arginyl-tRNA(Arg) + AMP + diphosphate</text>
        <dbReference type="Rhea" id="RHEA:20301"/>
        <dbReference type="Rhea" id="RHEA-COMP:9658"/>
        <dbReference type="Rhea" id="RHEA-COMP:9673"/>
        <dbReference type="ChEBI" id="CHEBI:30616"/>
        <dbReference type="ChEBI" id="CHEBI:32682"/>
        <dbReference type="ChEBI" id="CHEBI:33019"/>
        <dbReference type="ChEBI" id="CHEBI:78442"/>
        <dbReference type="ChEBI" id="CHEBI:78513"/>
        <dbReference type="ChEBI" id="CHEBI:456215"/>
        <dbReference type="EC" id="6.1.1.19"/>
    </reaction>
</comment>
<comment type="subunit">
    <text evidence="1">Monomer.</text>
</comment>
<comment type="subcellular location">
    <subcellularLocation>
        <location evidence="1">Cytoplasm</location>
    </subcellularLocation>
</comment>
<comment type="similarity">
    <text evidence="1">Belongs to the class-I aminoacyl-tRNA synthetase family.</text>
</comment>
<protein>
    <recommendedName>
        <fullName evidence="1">Arginine--tRNA ligase</fullName>
        <ecNumber evidence="1">6.1.1.19</ecNumber>
    </recommendedName>
    <alternativeName>
        <fullName evidence="1">Arginyl-tRNA synthetase</fullName>
        <shortName evidence="1">ArgRS</shortName>
    </alternativeName>
</protein>
<dbReference type="EC" id="6.1.1.19" evidence="1"/>
<dbReference type="EMBL" id="AE017354">
    <property type="protein sequence ID" value="AAU28100.1"/>
    <property type="molecule type" value="Genomic_DNA"/>
</dbReference>
<dbReference type="RefSeq" id="WP_010947747.1">
    <property type="nucleotide sequence ID" value="NC_002942.5"/>
</dbReference>
<dbReference type="RefSeq" id="YP_096047.1">
    <property type="nucleotide sequence ID" value="NC_002942.5"/>
</dbReference>
<dbReference type="SMR" id="Q5ZTX7"/>
<dbReference type="STRING" id="272624.lpg2031"/>
<dbReference type="PaxDb" id="272624-lpg2031"/>
<dbReference type="DNASU" id="3078795"/>
<dbReference type="GeneID" id="57036025"/>
<dbReference type="KEGG" id="lpn:lpg2031"/>
<dbReference type="PATRIC" id="fig|272624.6.peg.2127"/>
<dbReference type="eggNOG" id="COG0018">
    <property type="taxonomic scope" value="Bacteria"/>
</dbReference>
<dbReference type="HOGENOM" id="CLU_006406_0_1_6"/>
<dbReference type="OrthoDB" id="9803211at2"/>
<dbReference type="Proteomes" id="UP000000609">
    <property type="component" value="Chromosome"/>
</dbReference>
<dbReference type="GO" id="GO:0005737">
    <property type="term" value="C:cytoplasm"/>
    <property type="evidence" value="ECO:0007669"/>
    <property type="project" value="UniProtKB-SubCell"/>
</dbReference>
<dbReference type="GO" id="GO:0004814">
    <property type="term" value="F:arginine-tRNA ligase activity"/>
    <property type="evidence" value="ECO:0007669"/>
    <property type="project" value="UniProtKB-UniRule"/>
</dbReference>
<dbReference type="GO" id="GO:0005524">
    <property type="term" value="F:ATP binding"/>
    <property type="evidence" value="ECO:0007669"/>
    <property type="project" value="UniProtKB-UniRule"/>
</dbReference>
<dbReference type="GO" id="GO:0006420">
    <property type="term" value="P:arginyl-tRNA aminoacylation"/>
    <property type="evidence" value="ECO:0007669"/>
    <property type="project" value="UniProtKB-UniRule"/>
</dbReference>
<dbReference type="CDD" id="cd00671">
    <property type="entry name" value="ArgRS_core"/>
    <property type="match status" value="1"/>
</dbReference>
<dbReference type="FunFam" id="1.10.730.10:FF:000008">
    <property type="entry name" value="Arginine--tRNA ligase"/>
    <property type="match status" value="1"/>
</dbReference>
<dbReference type="FunFam" id="3.30.1360.70:FF:000003">
    <property type="entry name" value="Arginine--tRNA ligase"/>
    <property type="match status" value="1"/>
</dbReference>
<dbReference type="Gene3D" id="3.30.1360.70">
    <property type="entry name" value="Arginyl tRNA synthetase N-terminal domain"/>
    <property type="match status" value="1"/>
</dbReference>
<dbReference type="Gene3D" id="3.40.50.620">
    <property type="entry name" value="HUPs"/>
    <property type="match status" value="1"/>
</dbReference>
<dbReference type="Gene3D" id="1.10.730.10">
    <property type="entry name" value="Isoleucyl-tRNA Synthetase, Domain 1"/>
    <property type="match status" value="1"/>
</dbReference>
<dbReference type="HAMAP" id="MF_00123">
    <property type="entry name" value="Arg_tRNA_synth"/>
    <property type="match status" value="1"/>
</dbReference>
<dbReference type="InterPro" id="IPR001412">
    <property type="entry name" value="aa-tRNA-synth_I_CS"/>
</dbReference>
<dbReference type="InterPro" id="IPR001278">
    <property type="entry name" value="Arg-tRNA-ligase"/>
</dbReference>
<dbReference type="InterPro" id="IPR005148">
    <property type="entry name" value="Arg-tRNA-synth_N"/>
</dbReference>
<dbReference type="InterPro" id="IPR036695">
    <property type="entry name" value="Arg-tRNA-synth_N_sf"/>
</dbReference>
<dbReference type="InterPro" id="IPR035684">
    <property type="entry name" value="ArgRS_core"/>
</dbReference>
<dbReference type="InterPro" id="IPR008909">
    <property type="entry name" value="DALR_anticod-bd"/>
</dbReference>
<dbReference type="InterPro" id="IPR014729">
    <property type="entry name" value="Rossmann-like_a/b/a_fold"/>
</dbReference>
<dbReference type="InterPro" id="IPR009080">
    <property type="entry name" value="tRNAsynth_Ia_anticodon-bd"/>
</dbReference>
<dbReference type="NCBIfam" id="TIGR00456">
    <property type="entry name" value="argS"/>
    <property type="match status" value="1"/>
</dbReference>
<dbReference type="PANTHER" id="PTHR11956:SF5">
    <property type="entry name" value="ARGININE--TRNA LIGASE, CYTOPLASMIC"/>
    <property type="match status" value="1"/>
</dbReference>
<dbReference type="PANTHER" id="PTHR11956">
    <property type="entry name" value="ARGINYL-TRNA SYNTHETASE"/>
    <property type="match status" value="1"/>
</dbReference>
<dbReference type="Pfam" id="PF03485">
    <property type="entry name" value="Arg_tRNA_synt_N"/>
    <property type="match status" value="1"/>
</dbReference>
<dbReference type="Pfam" id="PF05746">
    <property type="entry name" value="DALR_1"/>
    <property type="match status" value="1"/>
</dbReference>
<dbReference type="Pfam" id="PF00750">
    <property type="entry name" value="tRNA-synt_1d"/>
    <property type="match status" value="2"/>
</dbReference>
<dbReference type="PRINTS" id="PR01038">
    <property type="entry name" value="TRNASYNTHARG"/>
</dbReference>
<dbReference type="SMART" id="SM01016">
    <property type="entry name" value="Arg_tRNA_synt_N"/>
    <property type="match status" value="1"/>
</dbReference>
<dbReference type="SMART" id="SM00836">
    <property type="entry name" value="DALR_1"/>
    <property type="match status" value="1"/>
</dbReference>
<dbReference type="SUPFAM" id="SSF47323">
    <property type="entry name" value="Anticodon-binding domain of a subclass of class I aminoacyl-tRNA synthetases"/>
    <property type="match status" value="1"/>
</dbReference>
<dbReference type="SUPFAM" id="SSF55190">
    <property type="entry name" value="Arginyl-tRNA synthetase (ArgRS), N-terminal 'additional' domain"/>
    <property type="match status" value="1"/>
</dbReference>
<dbReference type="SUPFAM" id="SSF52374">
    <property type="entry name" value="Nucleotidylyl transferase"/>
    <property type="match status" value="1"/>
</dbReference>
<dbReference type="PROSITE" id="PS00178">
    <property type="entry name" value="AA_TRNA_LIGASE_I"/>
    <property type="match status" value="1"/>
</dbReference>
<gene>
    <name evidence="1" type="primary">argS</name>
    <name type="ordered locus">lpg2031</name>
</gene>